<reference key="1">
    <citation type="journal article" date="2006" name="PLoS Genet.">
        <title>The complete genome sequence and comparative genome analysis of the high pathogenicity Yersinia enterocolitica strain 8081.</title>
        <authorList>
            <person name="Thomson N.R."/>
            <person name="Howard S."/>
            <person name="Wren B.W."/>
            <person name="Holden M.T.G."/>
            <person name="Crossman L."/>
            <person name="Challis G.L."/>
            <person name="Churcher C."/>
            <person name="Mungall K."/>
            <person name="Brooks K."/>
            <person name="Chillingworth T."/>
            <person name="Feltwell T."/>
            <person name="Abdellah Z."/>
            <person name="Hauser H."/>
            <person name="Jagels K."/>
            <person name="Maddison M."/>
            <person name="Moule S."/>
            <person name="Sanders M."/>
            <person name="Whitehead S."/>
            <person name="Quail M.A."/>
            <person name="Dougan G."/>
            <person name="Parkhill J."/>
            <person name="Prentice M.B."/>
        </authorList>
    </citation>
    <scope>NUCLEOTIDE SEQUENCE [LARGE SCALE GENOMIC DNA]</scope>
    <source>
        <strain>NCTC 13174 / 8081</strain>
    </source>
</reference>
<dbReference type="EC" id="2.7.7.89" evidence="1"/>
<dbReference type="EC" id="2.7.7.42" evidence="1"/>
<dbReference type="EMBL" id="AM286415">
    <property type="protein sequence ID" value="CAL13701.1"/>
    <property type="molecule type" value="Genomic_DNA"/>
</dbReference>
<dbReference type="RefSeq" id="WP_011817220.1">
    <property type="nucleotide sequence ID" value="NC_008800.1"/>
</dbReference>
<dbReference type="RefSeq" id="YP_001007829.1">
    <property type="nucleotide sequence ID" value="NC_008800.1"/>
</dbReference>
<dbReference type="SMR" id="A1JQV7"/>
<dbReference type="KEGG" id="yen:YE3674"/>
<dbReference type="PATRIC" id="fig|393305.7.peg.3911"/>
<dbReference type="eggNOG" id="COG1391">
    <property type="taxonomic scope" value="Bacteria"/>
</dbReference>
<dbReference type="HOGENOM" id="CLU_006233_0_1_6"/>
<dbReference type="OrthoDB" id="9759366at2"/>
<dbReference type="Proteomes" id="UP000000642">
    <property type="component" value="Chromosome"/>
</dbReference>
<dbReference type="GO" id="GO:0005829">
    <property type="term" value="C:cytosol"/>
    <property type="evidence" value="ECO:0007669"/>
    <property type="project" value="TreeGrafter"/>
</dbReference>
<dbReference type="GO" id="GO:0008882">
    <property type="term" value="F:[glutamate-ammonia-ligase] adenylyltransferase activity"/>
    <property type="evidence" value="ECO:0007669"/>
    <property type="project" value="UniProtKB-UniRule"/>
</dbReference>
<dbReference type="GO" id="GO:0047388">
    <property type="term" value="F:[glutamine synthetase]-adenylyl-L-tyrosine phosphorylase activity"/>
    <property type="evidence" value="ECO:0007669"/>
    <property type="project" value="UniProtKB-EC"/>
</dbReference>
<dbReference type="GO" id="GO:0005524">
    <property type="term" value="F:ATP binding"/>
    <property type="evidence" value="ECO:0007669"/>
    <property type="project" value="UniProtKB-UniRule"/>
</dbReference>
<dbReference type="GO" id="GO:0000287">
    <property type="term" value="F:magnesium ion binding"/>
    <property type="evidence" value="ECO:0007669"/>
    <property type="project" value="UniProtKB-UniRule"/>
</dbReference>
<dbReference type="GO" id="GO:0000820">
    <property type="term" value="P:regulation of glutamine family amino acid metabolic process"/>
    <property type="evidence" value="ECO:0007669"/>
    <property type="project" value="UniProtKB-UniRule"/>
</dbReference>
<dbReference type="CDD" id="cd05401">
    <property type="entry name" value="NT_GlnE_GlnD_like"/>
    <property type="match status" value="2"/>
</dbReference>
<dbReference type="FunFam" id="1.10.4050.10:FF:000001">
    <property type="entry name" value="Bifunctional glutamine synthetase adenylyltransferase/adenylyl-removing enzyme"/>
    <property type="match status" value="1"/>
</dbReference>
<dbReference type="FunFam" id="1.20.120.1510:FF:000001">
    <property type="entry name" value="Bifunctional glutamine synthetase adenylyltransferase/adenylyl-removing enzyme"/>
    <property type="match status" value="1"/>
</dbReference>
<dbReference type="FunFam" id="1.20.120.330:FF:000005">
    <property type="entry name" value="Bifunctional glutamine synthetase adenylyltransferase/adenylyl-removing enzyme"/>
    <property type="match status" value="1"/>
</dbReference>
<dbReference type="FunFam" id="1.20.120.330:FF:000008">
    <property type="entry name" value="Bifunctional glutamine synthetase adenylyltransferase/adenylyl-removing enzyme"/>
    <property type="match status" value="1"/>
</dbReference>
<dbReference type="FunFam" id="3.30.460.10:FF:000009">
    <property type="entry name" value="Bifunctional glutamine synthetase adenylyltransferase/adenylyl-removing enzyme"/>
    <property type="match status" value="1"/>
</dbReference>
<dbReference type="FunFam" id="3.30.460.10:FF:000014">
    <property type="entry name" value="Bifunctional glutamine synthetase adenylyltransferase/adenylyl-removing enzyme"/>
    <property type="match status" value="1"/>
</dbReference>
<dbReference type="Gene3D" id="1.20.120.1510">
    <property type="match status" value="1"/>
</dbReference>
<dbReference type="Gene3D" id="3.30.460.10">
    <property type="entry name" value="Beta Polymerase, domain 2"/>
    <property type="match status" value="2"/>
</dbReference>
<dbReference type="Gene3D" id="1.10.4050.10">
    <property type="entry name" value="Glutamine synthase adenylyltransferase GlnE"/>
    <property type="match status" value="1"/>
</dbReference>
<dbReference type="Gene3D" id="1.20.120.330">
    <property type="entry name" value="Nucleotidyltransferases domain 2"/>
    <property type="match status" value="2"/>
</dbReference>
<dbReference type="HAMAP" id="MF_00802">
    <property type="entry name" value="GlnE"/>
    <property type="match status" value="1"/>
</dbReference>
<dbReference type="InterPro" id="IPR023057">
    <property type="entry name" value="GlnE"/>
</dbReference>
<dbReference type="InterPro" id="IPR005190">
    <property type="entry name" value="GlnE_rpt_dom"/>
</dbReference>
<dbReference type="InterPro" id="IPR043519">
    <property type="entry name" value="NT_sf"/>
</dbReference>
<dbReference type="InterPro" id="IPR013546">
    <property type="entry name" value="PII_UdlTrfase/GS_AdlTrfase"/>
</dbReference>
<dbReference type="NCBIfam" id="NF008292">
    <property type="entry name" value="PRK11072.1"/>
    <property type="match status" value="1"/>
</dbReference>
<dbReference type="PANTHER" id="PTHR30621:SF0">
    <property type="entry name" value="BIFUNCTIONAL GLUTAMINE SYNTHETASE ADENYLYLTRANSFERASE_ADENYLYL-REMOVING ENZYME"/>
    <property type="match status" value="1"/>
</dbReference>
<dbReference type="PANTHER" id="PTHR30621">
    <property type="entry name" value="GLUTAMINE SYNTHETASE ADENYLYLTRANSFERASE"/>
    <property type="match status" value="1"/>
</dbReference>
<dbReference type="Pfam" id="PF08335">
    <property type="entry name" value="GlnD_UR_UTase"/>
    <property type="match status" value="2"/>
</dbReference>
<dbReference type="Pfam" id="PF03710">
    <property type="entry name" value="GlnE"/>
    <property type="match status" value="2"/>
</dbReference>
<dbReference type="SUPFAM" id="SSF81301">
    <property type="entry name" value="Nucleotidyltransferase"/>
    <property type="match status" value="2"/>
</dbReference>
<dbReference type="SUPFAM" id="SSF81593">
    <property type="entry name" value="Nucleotidyltransferase substrate binding subunit/domain"/>
    <property type="match status" value="2"/>
</dbReference>
<keyword id="KW-0067">ATP-binding</keyword>
<keyword id="KW-0460">Magnesium</keyword>
<keyword id="KW-0511">Multifunctional enzyme</keyword>
<keyword id="KW-0547">Nucleotide-binding</keyword>
<keyword id="KW-0548">Nucleotidyltransferase</keyword>
<keyword id="KW-0808">Transferase</keyword>
<organism>
    <name type="scientific">Yersinia enterocolitica serotype O:8 / biotype 1B (strain NCTC 13174 / 8081)</name>
    <dbReference type="NCBI Taxonomy" id="393305"/>
    <lineage>
        <taxon>Bacteria</taxon>
        <taxon>Pseudomonadati</taxon>
        <taxon>Pseudomonadota</taxon>
        <taxon>Gammaproteobacteria</taxon>
        <taxon>Enterobacterales</taxon>
        <taxon>Yersiniaceae</taxon>
        <taxon>Yersinia</taxon>
    </lineage>
</organism>
<proteinExistence type="inferred from homology"/>
<name>GLNE_YERE8</name>
<comment type="function">
    <text evidence="1">Involved in the regulation of glutamine synthetase GlnA, a key enzyme in the process to assimilate ammonia. When cellular nitrogen levels are high, the C-terminal adenylyl transferase (AT) inactivates GlnA by covalent transfer of an adenylyl group from ATP to specific tyrosine residue of GlnA, thus reducing its activity. Conversely, when nitrogen levels are low, the N-terminal adenylyl removase (AR) activates GlnA by removing the adenylyl group by phosphorolysis, increasing its activity. The regulatory region of GlnE binds the signal transduction protein PII (GlnB) which indicates the nitrogen status of the cell.</text>
</comment>
<comment type="catalytic activity">
    <reaction evidence="1">
        <text>[glutamine synthetase]-O(4)-(5'-adenylyl)-L-tyrosine + phosphate = [glutamine synthetase]-L-tyrosine + ADP</text>
        <dbReference type="Rhea" id="RHEA:43716"/>
        <dbReference type="Rhea" id="RHEA-COMP:10660"/>
        <dbReference type="Rhea" id="RHEA-COMP:10661"/>
        <dbReference type="ChEBI" id="CHEBI:43474"/>
        <dbReference type="ChEBI" id="CHEBI:46858"/>
        <dbReference type="ChEBI" id="CHEBI:83624"/>
        <dbReference type="ChEBI" id="CHEBI:456216"/>
        <dbReference type="EC" id="2.7.7.89"/>
    </reaction>
</comment>
<comment type="catalytic activity">
    <reaction evidence="1">
        <text>[glutamine synthetase]-L-tyrosine + ATP = [glutamine synthetase]-O(4)-(5'-adenylyl)-L-tyrosine + diphosphate</text>
        <dbReference type="Rhea" id="RHEA:18589"/>
        <dbReference type="Rhea" id="RHEA-COMP:10660"/>
        <dbReference type="Rhea" id="RHEA-COMP:10661"/>
        <dbReference type="ChEBI" id="CHEBI:30616"/>
        <dbReference type="ChEBI" id="CHEBI:33019"/>
        <dbReference type="ChEBI" id="CHEBI:46858"/>
        <dbReference type="ChEBI" id="CHEBI:83624"/>
        <dbReference type="EC" id="2.7.7.42"/>
    </reaction>
</comment>
<comment type="cofactor">
    <cofactor evidence="1">
        <name>Mg(2+)</name>
        <dbReference type="ChEBI" id="CHEBI:18420"/>
    </cofactor>
</comment>
<comment type="similarity">
    <text evidence="1">Belongs to the GlnE family.</text>
</comment>
<gene>
    <name evidence="1" type="primary">glnE</name>
    <name type="ordered locus">YE3674</name>
</gene>
<sequence>MLPLPSELQIQAQNIQQRFYELPAPLSLREEDIAVLVLSDFVSDMLLIHPDWLDELHQQPPQPQEWQFYQQWLSQALAEVQDEAALLAALRLFRRRIMVRIAWSQALETSSTTDTLQQLSWLAESLIIAARDWLYQACCREFGTPCNSEGVPQPLLILGMGKLGGGELNFSSDIDLIFAYPENGQTQGGRRQLDNAQFFTRLGQRLIKALDQQTIDGFVYRVDMRLRPFGDSGPLVLSFAALEDYYQEQGRDWERYAMVKARLMGGAEDHYSKELRQTLRPFVFRRYIDFSVIQSLRNMKGMIAREVRRRGLKDNIKLGAGGIREIEFITQVFQLIRGGREPRLQERALLPTLQAVAELGLLPEQQVADLSGSYLFLRRLENLLQAIADEQTQTLPSDSLNQARLACGMGYVDWVAMNAALEQHMQAVRLVFDHLIGDDAPDIGEDPSHGLYKSLWQDVLEEGDLAPLTPHLDEAARSQLLVTINHFRHDVDKRTIGPRGREVLDQLMPRLFAEVCPRPDANVALSRLIQLLLSIVTRTTYLELLVEYHAALKHVIRLCSASPMVASQLARYPLLLDELLDPQSLYQPLEPSAYRDELRQYLLRVPPDDEEQQLEALRQFKQAQQLRIAAGDITEALPVMKVSDHLTYLAEAMIDAVIQQAWNQMVARYGQPSHLQQREGRGFAVIGYGKLGGWELGYSSDLDLVFLLDCPLDVMTDGERSIDGRQFYLRLAQRVMHLFSTRTSSGILYEVDARLRPSGEAGMLVSTIEAFADYQQNEAWTWEHQALVRARIVYGCPELQQKFDAIRQQILCRSREGSQLQQEVREMREKMRNHLGSKQRDIFDIKADEGGITDIEFIAQYLVLRYAATEPRLTRWSDNVRIFELMANYDIMPEAEAAALTRAYVTMRDEIHHLALQEQSSKVSADCFAAEREQVAASWHKWLVAAPSDV</sequence>
<protein>
    <recommendedName>
        <fullName evidence="1">Bifunctional glutamine synthetase adenylyltransferase/adenylyl-removing enzyme</fullName>
    </recommendedName>
    <alternativeName>
        <fullName evidence="1">ATP:glutamine synthetase adenylyltransferase</fullName>
    </alternativeName>
    <alternativeName>
        <fullName evidence="1">ATase</fullName>
    </alternativeName>
    <domain>
        <recommendedName>
            <fullName evidence="1">Glutamine synthetase adenylyl-L-tyrosine phosphorylase</fullName>
            <ecNumber evidence="1">2.7.7.89</ecNumber>
        </recommendedName>
        <alternativeName>
            <fullName evidence="1">Adenylyl removase</fullName>
            <shortName evidence="1">AR</shortName>
            <shortName evidence="1">AT-N</shortName>
        </alternativeName>
    </domain>
    <domain>
        <recommendedName>
            <fullName evidence="1">Glutamine synthetase adenylyl transferase</fullName>
            <ecNumber evidence="1">2.7.7.42</ecNumber>
        </recommendedName>
        <alternativeName>
            <fullName evidence="1">Adenylyl transferase</fullName>
            <shortName evidence="1">AT</shortName>
            <shortName evidence="1">AT-C</shortName>
        </alternativeName>
    </domain>
</protein>
<feature type="chain" id="PRO_1000047020" description="Bifunctional glutamine synthetase adenylyltransferase/adenylyl-removing enzyme">
    <location>
        <begin position="1"/>
        <end position="950"/>
    </location>
</feature>
<feature type="region of interest" description="Adenylyl removase" evidence="1">
    <location>
        <begin position="1"/>
        <end position="440"/>
    </location>
</feature>
<feature type="region of interest" description="Adenylyl transferase" evidence="1">
    <location>
        <begin position="449"/>
        <end position="950"/>
    </location>
</feature>
<evidence type="ECO:0000255" key="1">
    <source>
        <dbReference type="HAMAP-Rule" id="MF_00802"/>
    </source>
</evidence>
<accession>A1JQV7</accession>